<sequence>MKKIFMMVHELDVNKGGMTSSMFNRSKEFYDADIPADIVTFDYKGNYDEIIKALKKQGKMDRRTKMYNVFEYFKQISNNKHFKSNKLLYKHISERLKNTIEIEESKGISRYFDITTGTYIAYIRKSKSEKVIDFFKDNKRIERFSFIDNKVHMKETFNVDNKVCYQVFYDEKGYPYISRNINANNGAVGKTYVLVNKKEFKNNLALCVYYLEKLIKDSKDSIMICDGPGSFPKMFNTNHKNAQKYGVIHVNHHENFDDTGAFKKSEKYIIENANKINGVIVLTEAQRLDILNQFDVENIFTISNFVKIHNAPKHFQTEKIVGHISRMVPTKRIDLLIEVAELVVKKDNAVKFHIYGEGSVKDKIAKMIEDKNLERNVFLKGYTTTPQKCLEDFKLVVSTSQYEGQGLSMIEAMISKRPVVAFDIKYGPSDFIEDNKNGYLIENHNINDMADKILQLVNNDVLAAEFGSKARENIIEKYSTESILEKWLNLFNS</sequence>
<protein>
    <recommendedName>
        <fullName evidence="5">Poly(ribitol-phosphate) alpha-N-acetylglucosaminyltransferase</fullName>
        <ecNumber evidence="1 2 3">2.4.1.70</ecNumber>
    </recommendedName>
    <alternativeName>
        <fullName evidence="4">WTA GlcNAc-transferase</fullName>
    </alternativeName>
</protein>
<organism>
    <name type="scientific">Staphylococcus aureus (strain COL)</name>
    <dbReference type="NCBI Taxonomy" id="93062"/>
    <lineage>
        <taxon>Bacteria</taxon>
        <taxon>Bacillati</taxon>
        <taxon>Bacillota</taxon>
        <taxon>Bacilli</taxon>
        <taxon>Bacillales</taxon>
        <taxon>Staphylococcaceae</taxon>
        <taxon>Staphylococcus</taxon>
    </lineage>
</organism>
<dbReference type="EC" id="2.4.1.70" evidence="1 2 3"/>
<dbReference type="EMBL" id="CP000046">
    <property type="protein sequence ID" value="AAW36508.1"/>
    <property type="molecule type" value="Genomic_DNA"/>
</dbReference>
<dbReference type="RefSeq" id="WP_000719184.1">
    <property type="nucleotide sequence ID" value="NZ_JBGOFO010000002.1"/>
</dbReference>
<dbReference type="PDB" id="4WAC">
    <property type="method" value="X-ray"/>
    <property type="resolution" value="2.40 A"/>
    <property type="chains" value="A=1-493"/>
</dbReference>
<dbReference type="PDB" id="4WAD">
    <property type="method" value="X-ray"/>
    <property type="resolution" value="2.80 A"/>
    <property type="chains" value="A=1-493"/>
</dbReference>
<dbReference type="PDB" id="4X6L">
    <property type="method" value="X-ray"/>
    <property type="resolution" value="3.19 A"/>
    <property type="chains" value="A/B/C/D=1-493"/>
</dbReference>
<dbReference type="PDB" id="4X7M">
    <property type="method" value="X-ray"/>
    <property type="resolution" value="2.40 A"/>
    <property type="chains" value="A/B=1-493"/>
</dbReference>
<dbReference type="PDB" id="4X7P">
    <property type="method" value="X-ray"/>
    <property type="resolution" value="3.40 A"/>
    <property type="chains" value="A/B=1-493"/>
</dbReference>
<dbReference type="PDB" id="4X7R">
    <property type="method" value="X-ray"/>
    <property type="resolution" value="2.15 A"/>
    <property type="chains" value="A/B=1-493"/>
</dbReference>
<dbReference type="PDBsum" id="4WAC"/>
<dbReference type="PDBsum" id="4WAD"/>
<dbReference type="PDBsum" id="4X6L"/>
<dbReference type="PDBsum" id="4X7M"/>
<dbReference type="PDBsum" id="4X7P"/>
<dbReference type="PDBsum" id="4X7R"/>
<dbReference type="SMR" id="A0A0H2WWV6"/>
<dbReference type="KEGG" id="sac:SACOL1043"/>
<dbReference type="PATRIC" id="fig|904724.3.peg.2374"/>
<dbReference type="HOGENOM" id="CLU_009583_21_4_9"/>
<dbReference type="UniPathway" id="UPA00790"/>
<dbReference type="EvolutionaryTrace" id="A0A0H2WWV6"/>
<dbReference type="Proteomes" id="UP000000530">
    <property type="component" value="Chromosome"/>
</dbReference>
<dbReference type="GO" id="GO:0005737">
    <property type="term" value="C:cytoplasm"/>
    <property type="evidence" value="ECO:0007669"/>
    <property type="project" value="UniProtKB-SubCell"/>
</dbReference>
<dbReference type="GO" id="GO:0047269">
    <property type="term" value="F:poly(ribitol-phosphate) N-acetylglucosaminyltransferase activity"/>
    <property type="evidence" value="ECO:0007669"/>
    <property type="project" value="UniProtKB-EC"/>
</dbReference>
<dbReference type="GO" id="GO:0071555">
    <property type="term" value="P:cell wall organization"/>
    <property type="evidence" value="ECO:0007669"/>
    <property type="project" value="UniProtKB-KW"/>
</dbReference>
<dbReference type="GO" id="GO:0019350">
    <property type="term" value="P:teichoic acid biosynthetic process"/>
    <property type="evidence" value="ECO:0007669"/>
    <property type="project" value="UniProtKB-KW"/>
</dbReference>
<dbReference type="CDD" id="cd04949">
    <property type="entry name" value="GT4_GtfA-like"/>
    <property type="match status" value="1"/>
</dbReference>
<dbReference type="Gene3D" id="3.40.50.2000">
    <property type="entry name" value="Glycogen Phosphorylase B"/>
    <property type="match status" value="2"/>
</dbReference>
<dbReference type="InterPro" id="IPR001296">
    <property type="entry name" value="Glyco_trans_1"/>
</dbReference>
<dbReference type="PANTHER" id="PTHR12526">
    <property type="entry name" value="GLYCOSYLTRANSFERASE"/>
    <property type="match status" value="1"/>
</dbReference>
<dbReference type="PANTHER" id="PTHR12526:SF629">
    <property type="entry name" value="TEICHURONIC ACID BIOSYNTHESIS GLYCOSYLTRANSFERASE TUAH-RELATED"/>
    <property type="match status" value="1"/>
</dbReference>
<dbReference type="Pfam" id="PF00534">
    <property type="entry name" value="Glycos_transf_1"/>
    <property type="match status" value="1"/>
</dbReference>
<dbReference type="SUPFAM" id="SSF53756">
    <property type="entry name" value="UDP-Glycosyltransferase/glycogen phosphorylase"/>
    <property type="match status" value="1"/>
</dbReference>
<evidence type="ECO:0000269" key="1">
    <source>
    </source>
</evidence>
<evidence type="ECO:0000269" key="2">
    <source>
    </source>
</evidence>
<evidence type="ECO:0000269" key="3">
    <source>
    </source>
</evidence>
<evidence type="ECO:0000303" key="4">
    <source>
    </source>
</evidence>
<evidence type="ECO:0000305" key="5"/>
<evidence type="ECO:0000305" key="6">
    <source>
    </source>
</evidence>
<evidence type="ECO:0000312" key="7">
    <source>
        <dbReference type="EMBL" id="AAW36508.1"/>
    </source>
</evidence>
<evidence type="ECO:0007744" key="8">
    <source>
        <dbReference type="PDB" id="4WAC"/>
    </source>
</evidence>
<evidence type="ECO:0007744" key="9">
    <source>
        <dbReference type="PDB" id="4WAD"/>
    </source>
</evidence>
<evidence type="ECO:0007744" key="10">
    <source>
        <dbReference type="PDB" id="4X6L"/>
    </source>
</evidence>
<evidence type="ECO:0007744" key="11">
    <source>
        <dbReference type="PDB" id="4X7M"/>
    </source>
</evidence>
<evidence type="ECO:0007744" key="12">
    <source>
        <dbReference type="PDB" id="4X7P"/>
    </source>
</evidence>
<evidence type="ECO:0007744" key="13">
    <source>
        <dbReference type="PDB" id="4X7R"/>
    </source>
</evidence>
<evidence type="ECO:0007829" key="14">
    <source>
        <dbReference type="PDB" id="4X7R"/>
    </source>
</evidence>
<reference key="1">
    <citation type="journal article" date="2005" name="J. Bacteriol.">
        <title>Insights on evolution of virulence and resistance from the complete genome analysis of an early methicillin-resistant Staphylococcus aureus strain and a biofilm-producing methicillin-resistant Staphylococcus epidermidis strain.</title>
        <authorList>
            <person name="Gill S.R."/>
            <person name="Fouts D.E."/>
            <person name="Archer G.L."/>
            <person name="Mongodin E.F."/>
            <person name="DeBoy R.T."/>
            <person name="Ravel J."/>
            <person name="Paulsen I.T."/>
            <person name="Kolonay J.F."/>
            <person name="Brinkac L.M."/>
            <person name="Beanan M.J."/>
            <person name="Dodson R.J."/>
            <person name="Daugherty S.C."/>
            <person name="Madupu R."/>
            <person name="Angiuoli S.V."/>
            <person name="Durkin A.S."/>
            <person name="Haft D.H."/>
            <person name="Vamathevan J.J."/>
            <person name="Khouri H."/>
            <person name="Utterback T.R."/>
            <person name="Lee C."/>
            <person name="Dimitrov G."/>
            <person name="Jiang L."/>
            <person name="Qin H."/>
            <person name="Weidman J."/>
            <person name="Tran K."/>
            <person name="Kang K.H."/>
            <person name="Hance I.R."/>
            <person name="Nelson K.E."/>
            <person name="Fraser C.M."/>
        </authorList>
    </citation>
    <scope>NUCLEOTIDE SEQUENCE [LARGE SCALE GENOMIC DNA]</scope>
    <source>
        <strain>COL</strain>
    </source>
</reference>
<reference key="2">
    <citation type="journal article" date="2010" name="J. Biol. Chem.">
        <title>Glycosylation of wall teichoic acid in Staphylococcus aureus by TarM.</title>
        <authorList>
            <person name="Xia G."/>
            <person name="Maier L."/>
            <person name="Sanchez-Carballo P."/>
            <person name="Li M."/>
            <person name="Otto M."/>
            <person name="Holst O."/>
            <person name="Peschel A."/>
        </authorList>
    </citation>
    <scope>FUNCTION</scope>
    <scope>CATALYTIC ACTIVITY</scope>
    <scope>PATHWAY</scope>
    <scope>SUBCELLULAR LOCATION</scope>
    <scope>DISRUPTION PHENOTYPE</scope>
    <scope>MUTAGENESIS OF 487-TRP--SER-493</scope>
    <source>
        <strain>COL</strain>
        <strain>RN4220</strain>
    </source>
</reference>
<reference evidence="10 11 12 13" key="3">
    <citation type="journal article" date="2015" name="Proc. Natl. Acad. Sci. U.S.A.">
        <title>Structure and mechanism of Staphylococcus aureus TarM, the wall teichoic acid alpha-glycosyltransferase.</title>
        <authorList>
            <person name="Sobhanifar S."/>
            <person name="Worrall L.J."/>
            <person name="Gruninger R.J."/>
            <person name="Wasney G.A."/>
            <person name="Blaukopf M."/>
            <person name="Baumann L."/>
            <person name="Lameignere E."/>
            <person name="Solomonson M."/>
            <person name="Brown E.D."/>
            <person name="Withers S.G."/>
            <person name="Strynadka N.C."/>
        </authorList>
    </citation>
    <scope>X-RAY CRYSTALLOGRAPHY (2.15 ANGSTROMS) IN COMPLEXES WITH UDP AND UDP-GLCNAC AND OF MUTANT ARG-117 IN COMPLEX WITH UDP AND ACCEPTOR SUBSTRATE ANALOG</scope>
    <scope>FUNCTION</scope>
    <scope>CATALYTIC ACTIVITY</scope>
    <scope>BIOPHYSICOCHEMICAL PROPERTIES</scope>
    <scope>SUBUNIT</scope>
    <scope>MUTAGENESIS OF HIS-249; ARG-326; LYS-331; GLU-403 AND GLU-411</scope>
    <source>
        <strain>subsp. aureus 21178</strain>
    </source>
</reference>
<reference evidence="8 9" key="4">
    <citation type="journal article" date="2015" name="J. Biol. Chem.">
        <title>Structural and enzymatic analysis of TarM glycosyltransferase from Staphylococcus aureus reveals an oligomeric protein specific for the glycosylation of wall teichoic acid.</title>
        <authorList>
            <person name="Koc C."/>
            <person name="Gerlach D."/>
            <person name="Beck S."/>
            <person name="Peschel A."/>
            <person name="Xia G."/>
            <person name="Stehle T."/>
        </authorList>
    </citation>
    <scope>X-RAY CRYSTALLOGRAPHY (2.40 ANGSTROMS) OF APOENZYME AND IN COMPLEX WITH UDP-GLCNAC</scope>
    <scope>FUNCTION</scope>
    <scope>CATALYTIC ACTIVITY</scope>
    <scope>SUBUNIT</scope>
    <scope>DOMAIN</scope>
    <scope>MUTAGENESIS OF LYS-136; ASN-138; ASN-180; HIS-249; ARG-326; LYS-331; GLU-403 AND GLU-411</scope>
</reference>
<proteinExistence type="evidence at protein level"/>
<keyword id="KW-0002">3D-structure</keyword>
<keyword id="KW-0961">Cell wall biogenesis/degradation</keyword>
<keyword id="KW-0963">Cytoplasm</keyword>
<keyword id="KW-0328">Glycosyltransferase</keyword>
<keyword id="KW-0777">Teichoic acid biosynthesis</keyword>
<keyword id="KW-0808">Transferase</keyword>
<comment type="function">
    <text evidence="1 2 3">Attaches N-acetyl-alpha-D-glucosamine residues to poly(RboP)-wall teichoic acids (WTAs).</text>
</comment>
<comment type="catalytic activity">
    <reaction evidence="1 2 3">
        <text>4-O-[(D-ribitylphospho)(n)-di{(2R)-glycerylphospho}]-N-acetyl-beta-D-mannosaminyl-(1-&gt;4)-N-acetyl-alpha-D-glucosaminyl di-trans,octa-cis-undecaprenyl diphosphate + n UDP-N-acetyl-alpha-D-glucosamine = 4-O-([2-N-acetyl-alpha-D-glucosaminyl-1-D-ribitylphospho](n)-di{[2R]-1-glycerylphospho})-N-acetyl-beta-D-mannosaminyl-(1-&gt;4)-N-acetyl-alpha-D-glucosaminyl di-trans,octa-cis-undecaprenyl diphosphate + n UDP + n H(+)</text>
        <dbReference type="Rhea" id="RHEA:21012"/>
        <dbReference type="Rhea" id="RHEA-COMP:12840"/>
        <dbReference type="Rhea" id="RHEA-COMP:14256"/>
        <dbReference type="ChEBI" id="CHEBI:15378"/>
        <dbReference type="ChEBI" id="CHEBI:57705"/>
        <dbReference type="ChEBI" id="CHEBI:58223"/>
        <dbReference type="ChEBI" id="CHEBI:133896"/>
        <dbReference type="ChEBI" id="CHEBI:139145"/>
        <dbReference type="EC" id="2.4.1.70"/>
    </reaction>
</comment>
<comment type="biophysicochemical properties">
    <kinetics>
        <KM evidence="2">65 uM for UDP-GlcNAc</KM>
        <KM evidence="2">390 uM for WTA</KM>
        <text evidence="2">kcat is 126 min(-1).</text>
    </kinetics>
</comment>
<comment type="pathway">
    <text evidence="1">Cell wall biogenesis; poly(ribitol phosphate) teichoic acid biosynthesis.</text>
</comment>
<comment type="subunit">
    <text evidence="2 3">Homotrimer.</text>
</comment>
<comment type="subcellular location">
    <subcellularLocation>
        <location evidence="6">Cytoplasm</location>
    </subcellularLocation>
</comment>
<comment type="domain">
    <text evidence="3">Assembles into a propeller-like homotrimer in which each blade contains a GT-B-type glycosyltransferase domain with a typical Rossmann fold. Assembles into a trimer using a novel trimerization domain, termed the HUB domain.</text>
</comment>
<comment type="disruption phenotype">
    <text evidence="1">Inactivation of the gene leads to resistance to serogroup B phages. Disruption leads to altered WTA that lacks the alpha-GlcNAc residues. Mutant exhibits no major changes in growth kinetics, microscopic appearance or antibiotic susceptibility.</text>
</comment>
<comment type="similarity">
    <text evidence="5">Belongs to the glycosyltransferase group 1 family.</text>
</comment>
<name>TARM_STAAC</name>
<accession>A0A0H2WWV6</accession>
<accession>A0A0J9X256</accession>
<accession>A0A0J9X257</accession>
<gene>
    <name evidence="4" type="primary">tarM</name>
    <name evidence="7" type="ordered locus">SACOL1043</name>
</gene>
<feature type="chain" id="PRO_0000446297" description="Poly(ribitol-phosphate) alpha-N-acetylglucosaminyltransferase">
    <location>
        <begin position="1"/>
        <end position="493"/>
    </location>
</feature>
<feature type="binding site" evidence="2 3">
    <location>
        <position position="17"/>
    </location>
    <ligand>
        <name>UDP-N-acetyl-alpha-D-glucosamine</name>
        <dbReference type="ChEBI" id="CHEBI:57705"/>
    </ligand>
</feature>
<feature type="binding site" evidence="2">
    <location>
        <position position="59"/>
    </location>
    <ligand>
        <name>UDP-N-acetyl-alpha-D-glucosamine</name>
        <dbReference type="ChEBI" id="CHEBI:57705"/>
    </ligand>
</feature>
<feature type="binding site" evidence="3">
    <location>
        <position position="249"/>
    </location>
    <ligand>
        <name>UDP-N-acetyl-alpha-D-glucosamine</name>
        <dbReference type="ChEBI" id="CHEBI:57705"/>
    </ligand>
</feature>
<feature type="binding site" evidence="2">
    <location>
        <position position="326"/>
    </location>
    <ligand>
        <name>UDP-N-acetyl-alpha-D-glucosamine</name>
        <dbReference type="ChEBI" id="CHEBI:57705"/>
    </ligand>
</feature>
<feature type="binding site" evidence="2">
    <location>
        <position position="331"/>
    </location>
    <ligand>
        <name>UDP-N-acetyl-alpha-D-glucosamine</name>
        <dbReference type="ChEBI" id="CHEBI:57705"/>
    </ligand>
</feature>
<feature type="binding site" evidence="2 3">
    <location>
        <position position="383"/>
    </location>
    <ligand>
        <name>UDP-N-acetyl-alpha-D-glucosamine</name>
        <dbReference type="ChEBI" id="CHEBI:57705"/>
    </ligand>
</feature>
<feature type="binding site" evidence="2 3">
    <location>
        <begin position="403"/>
        <end position="411"/>
    </location>
    <ligand>
        <name>UDP-N-acetyl-alpha-D-glucosamine</name>
        <dbReference type="ChEBI" id="CHEBI:57705"/>
    </ligand>
</feature>
<feature type="mutagenesis site" description="Forms monomers. No change in activity." evidence="2">
    <original>G</original>
    <variation>R</variation>
    <location>
        <position position="117"/>
    </location>
</feature>
<feature type="mutagenesis site" description="Decrease in activity." evidence="3">
    <original>K</original>
    <variation>S</variation>
    <location>
        <position position="136"/>
    </location>
</feature>
<feature type="mutagenesis site" description="Slight decrease in activity." evidence="3">
    <original>N</original>
    <variation>Q</variation>
    <location>
        <position position="138"/>
    </location>
</feature>
<feature type="mutagenesis site" description="No change in activity." evidence="3">
    <original>N</original>
    <variation>W</variation>
    <location>
        <position position="180"/>
    </location>
</feature>
<feature type="mutagenesis site" description="Severe decrease in activity." evidence="2 3">
    <original>H</original>
    <variation>A</variation>
    <location>
        <position position="249"/>
    </location>
</feature>
<feature type="mutagenesis site" description="Loss of activity." evidence="2">
    <original>R</original>
    <variation>A</variation>
    <location>
        <position position="326"/>
    </location>
</feature>
<feature type="mutagenesis site" description="Strong decrease in activity." evidence="3">
    <original>R</original>
    <variation>S</variation>
    <location>
        <position position="326"/>
    </location>
</feature>
<feature type="mutagenesis site" description="Loss of activity." evidence="2 3">
    <original>K</original>
    <variation>A</variation>
    <variation>S</variation>
    <location>
        <position position="331"/>
    </location>
</feature>
<feature type="mutagenesis site" description="Loss of activity." evidence="2 3">
    <original>E</original>
    <variation>A</variation>
    <location>
        <position position="403"/>
    </location>
</feature>
<feature type="mutagenesis site" description="Severe decrease in activity." evidence="2 3">
    <original>E</original>
    <variation>A</variation>
    <location>
        <position position="411"/>
    </location>
</feature>
<feature type="mutagenesis site" description="In 52B2; loss of activity. Phage-resistant phenotype." evidence="1">
    <location>
        <begin position="487"/>
        <end position="493"/>
    </location>
</feature>
<feature type="strand" evidence="14">
    <location>
        <begin position="3"/>
        <end position="7"/>
    </location>
</feature>
<feature type="helix" evidence="14">
    <location>
        <begin position="17"/>
        <end position="31"/>
    </location>
</feature>
<feature type="strand" evidence="14">
    <location>
        <begin position="36"/>
        <end position="40"/>
    </location>
</feature>
<feature type="helix" evidence="14">
    <location>
        <begin position="47"/>
        <end position="56"/>
    </location>
</feature>
<feature type="strand" evidence="14">
    <location>
        <begin position="66"/>
        <end position="68"/>
    </location>
</feature>
<feature type="helix" evidence="14">
    <location>
        <begin position="69"/>
        <end position="78"/>
    </location>
</feature>
<feature type="helix" evidence="14">
    <location>
        <begin position="86"/>
        <end position="95"/>
    </location>
</feature>
<feature type="turn" evidence="14">
    <location>
        <begin position="96"/>
        <end position="98"/>
    </location>
</feature>
<feature type="strand" evidence="14">
    <location>
        <begin position="99"/>
        <end position="103"/>
    </location>
</feature>
<feature type="strand" evidence="14">
    <location>
        <begin position="105"/>
        <end position="113"/>
    </location>
</feature>
<feature type="turn" evidence="14">
    <location>
        <begin position="114"/>
        <end position="116"/>
    </location>
</feature>
<feature type="strand" evidence="14">
    <location>
        <begin position="119"/>
        <end position="126"/>
    </location>
</feature>
<feature type="strand" evidence="14">
    <location>
        <begin position="129"/>
        <end position="136"/>
    </location>
</feature>
<feature type="strand" evidence="14">
    <location>
        <begin position="139"/>
        <end position="147"/>
    </location>
</feature>
<feature type="strand" evidence="14">
    <location>
        <begin position="150"/>
        <end position="157"/>
    </location>
</feature>
<feature type="strand" evidence="14">
    <location>
        <begin position="163"/>
        <end position="169"/>
    </location>
</feature>
<feature type="strand" evidence="14">
    <location>
        <begin position="175"/>
        <end position="181"/>
    </location>
</feature>
<feature type="turn" evidence="14">
    <location>
        <begin position="183"/>
        <end position="185"/>
    </location>
</feature>
<feature type="strand" evidence="14">
    <location>
        <begin position="188"/>
        <end position="193"/>
    </location>
</feature>
<feature type="turn" evidence="14">
    <location>
        <begin position="194"/>
        <end position="197"/>
    </location>
</feature>
<feature type="strand" evidence="14">
    <location>
        <begin position="198"/>
        <end position="202"/>
    </location>
</feature>
<feature type="helix" evidence="14">
    <location>
        <begin position="203"/>
        <end position="214"/>
    </location>
</feature>
<feature type="strand" evidence="14">
    <location>
        <begin position="221"/>
        <end position="225"/>
    </location>
</feature>
<feature type="helix" evidence="14">
    <location>
        <begin position="228"/>
        <end position="230"/>
    </location>
</feature>
<feature type="helix" evidence="14">
    <location>
        <begin position="231"/>
        <end position="235"/>
    </location>
</feature>
<feature type="strand" evidence="14">
    <location>
        <begin position="240"/>
        <end position="247"/>
    </location>
</feature>
<feature type="helix" evidence="14">
    <location>
        <begin position="264"/>
        <end position="271"/>
    </location>
</feature>
<feature type="helix" evidence="14">
    <location>
        <begin position="272"/>
        <end position="275"/>
    </location>
</feature>
<feature type="strand" evidence="14">
    <location>
        <begin position="276"/>
        <end position="283"/>
    </location>
</feature>
<feature type="helix" evidence="14">
    <location>
        <begin position="284"/>
        <end position="293"/>
    </location>
</feature>
<feature type="strand" evidence="14">
    <location>
        <begin position="299"/>
        <end position="301"/>
    </location>
</feature>
<feature type="strand" evidence="14">
    <location>
        <begin position="320"/>
        <end position="325"/>
    </location>
</feature>
<feature type="helix" evidence="14">
    <location>
        <begin position="329"/>
        <end position="331"/>
    </location>
</feature>
<feature type="helix" evidence="14">
    <location>
        <begin position="333"/>
        <end position="346"/>
    </location>
</feature>
<feature type="strand" evidence="14">
    <location>
        <begin position="351"/>
        <end position="355"/>
    </location>
</feature>
<feature type="helix" evidence="14">
    <location>
        <begin position="361"/>
        <end position="370"/>
    </location>
</feature>
<feature type="turn" evidence="14">
    <location>
        <begin position="374"/>
        <end position="376"/>
    </location>
</feature>
<feature type="strand" evidence="14">
    <location>
        <begin position="377"/>
        <end position="381"/>
    </location>
</feature>
<feature type="helix" evidence="14">
    <location>
        <begin position="386"/>
        <end position="391"/>
    </location>
</feature>
<feature type="strand" evidence="14">
    <location>
        <begin position="394"/>
        <end position="398"/>
    </location>
</feature>
<feature type="helix" evidence="14">
    <location>
        <begin position="407"/>
        <end position="414"/>
    </location>
</feature>
<feature type="strand" evidence="14">
    <location>
        <begin position="419"/>
        <end position="422"/>
    </location>
</feature>
<feature type="strand" evidence="14">
    <location>
        <begin position="425"/>
        <end position="427"/>
    </location>
</feature>
<feature type="helix" evidence="14">
    <location>
        <begin position="428"/>
        <end position="431"/>
    </location>
</feature>
<feature type="turn" evidence="14">
    <location>
        <begin position="434"/>
        <end position="436"/>
    </location>
</feature>
<feature type="strand" evidence="14">
    <location>
        <begin position="437"/>
        <end position="441"/>
    </location>
</feature>
<feature type="helix" evidence="14">
    <location>
        <begin position="446"/>
        <end position="457"/>
    </location>
</feature>
<feature type="helix" evidence="14">
    <location>
        <begin position="460"/>
        <end position="477"/>
    </location>
</feature>
<feature type="helix" evidence="14">
    <location>
        <begin position="480"/>
        <end position="492"/>
    </location>
</feature>